<dbReference type="EC" id="2.8.1.8" evidence="1"/>
<dbReference type="EMBL" id="CU329671">
    <property type="protein sequence ID" value="CAA17830.1"/>
    <property type="molecule type" value="Genomic_DNA"/>
</dbReference>
<dbReference type="EMBL" id="AB004537">
    <property type="protein sequence ID" value="BAA21430.1"/>
    <property type="molecule type" value="Genomic_DNA"/>
</dbReference>
<dbReference type="EMBL" id="AB004538">
    <property type="protein sequence ID" value="BAA21431.1"/>
    <property type="molecule type" value="Genomic_DNA"/>
</dbReference>
<dbReference type="PIR" id="T40760">
    <property type="entry name" value="T40760"/>
</dbReference>
<dbReference type="RefSeq" id="NP_595577.1">
    <property type="nucleotide sequence ID" value="NM_001021472.2"/>
</dbReference>
<dbReference type="SMR" id="O13642"/>
<dbReference type="BioGRID" id="277748">
    <property type="interactions" value="1"/>
</dbReference>
<dbReference type="FunCoup" id="O13642">
    <property type="interactions" value="432"/>
</dbReference>
<dbReference type="STRING" id="284812.O13642"/>
<dbReference type="PaxDb" id="4896-SPBC8D2.15.1"/>
<dbReference type="EnsemblFungi" id="SPBC8D2.15.1">
    <property type="protein sequence ID" value="SPBC8D2.15.1:pep"/>
    <property type="gene ID" value="SPBC8D2.15"/>
</dbReference>
<dbReference type="PomBase" id="SPBC8D2.15">
    <property type="gene designation" value="lip5"/>
</dbReference>
<dbReference type="VEuPathDB" id="FungiDB:SPBC8D2.15"/>
<dbReference type="eggNOG" id="KOG2672">
    <property type="taxonomic scope" value="Eukaryota"/>
</dbReference>
<dbReference type="HOGENOM" id="CLU_033144_2_0_1"/>
<dbReference type="InParanoid" id="O13642"/>
<dbReference type="OMA" id="PYCDIDF"/>
<dbReference type="PhylomeDB" id="O13642"/>
<dbReference type="UniPathway" id="UPA00538">
    <property type="reaction ID" value="UER00593"/>
</dbReference>
<dbReference type="PRO" id="PR:O13642"/>
<dbReference type="Proteomes" id="UP000002485">
    <property type="component" value="Chromosome II"/>
</dbReference>
<dbReference type="GO" id="GO:0005739">
    <property type="term" value="C:mitochondrion"/>
    <property type="evidence" value="ECO:0007005"/>
    <property type="project" value="PomBase"/>
</dbReference>
<dbReference type="GO" id="GO:0051539">
    <property type="term" value="F:4 iron, 4 sulfur cluster binding"/>
    <property type="evidence" value="ECO:0007669"/>
    <property type="project" value="UniProtKB-UniRule"/>
</dbReference>
<dbReference type="GO" id="GO:0016992">
    <property type="term" value="F:lipoate synthase activity"/>
    <property type="evidence" value="ECO:0000318"/>
    <property type="project" value="GO_Central"/>
</dbReference>
<dbReference type="GO" id="GO:0046872">
    <property type="term" value="F:metal ion binding"/>
    <property type="evidence" value="ECO:0007669"/>
    <property type="project" value="UniProtKB-KW"/>
</dbReference>
<dbReference type="GO" id="GO:0009107">
    <property type="term" value="P:lipoate biosynthetic process"/>
    <property type="evidence" value="ECO:0000318"/>
    <property type="project" value="GO_Central"/>
</dbReference>
<dbReference type="GO" id="GO:0051604">
    <property type="term" value="P:protein maturation"/>
    <property type="evidence" value="ECO:0000303"/>
    <property type="project" value="PomBase"/>
</dbReference>
<dbReference type="CDD" id="cd01335">
    <property type="entry name" value="Radical_SAM"/>
    <property type="match status" value="1"/>
</dbReference>
<dbReference type="FunFam" id="3.20.20.70:FF:000036">
    <property type="entry name" value="Lipoyl synthase, mitochondrial"/>
    <property type="match status" value="1"/>
</dbReference>
<dbReference type="Gene3D" id="3.20.20.70">
    <property type="entry name" value="Aldolase class I"/>
    <property type="match status" value="1"/>
</dbReference>
<dbReference type="HAMAP" id="MF_00206">
    <property type="entry name" value="Lipoyl_synth"/>
    <property type="match status" value="1"/>
</dbReference>
<dbReference type="InterPro" id="IPR013785">
    <property type="entry name" value="Aldolase_TIM"/>
</dbReference>
<dbReference type="InterPro" id="IPR006638">
    <property type="entry name" value="Elp3/MiaA/NifB-like_rSAM"/>
</dbReference>
<dbReference type="InterPro" id="IPR031691">
    <property type="entry name" value="LIAS_N"/>
</dbReference>
<dbReference type="InterPro" id="IPR003698">
    <property type="entry name" value="Lipoyl_synth"/>
</dbReference>
<dbReference type="InterPro" id="IPR007197">
    <property type="entry name" value="rSAM"/>
</dbReference>
<dbReference type="NCBIfam" id="TIGR00510">
    <property type="entry name" value="lipA"/>
    <property type="match status" value="1"/>
</dbReference>
<dbReference type="NCBIfam" id="NF004019">
    <property type="entry name" value="PRK05481.1"/>
    <property type="match status" value="1"/>
</dbReference>
<dbReference type="NCBIfam" id="NF009544">
    <property type="entry name" value="PRK12928.1"/>
    <property type="match status" value="1"/>
</dbReference>
<dbReference type="PANTHER" id="PTHR10949">
    <property type="entry name" value="LIPOYL SYNTHASE"/>
    <property type="match status" value="1"/>
</dbReference>
<dbReference type="PANTHER" id="PTHR10949:SF0">
    <property type="entry name" value="LIPOYL SYNTHASE, MITOCHONDRIAL"/>
    <property type="match status" value="1"/>
</dbReference>
<dbReference type="Pfam" id="PF16881">
    <property type="entry name" value="LIAS_N"/>
    <property type="match status" value="1"/>
</dbReference>
<dbReference type="Pfam" id="PF04055">
    <property type="entry name" value="Radical_SAM"/>
    <property type="match status" value="1"/>
</dbReference>
<dbReference type="PIRSF" id="PIRSF005963">
    <property type="entry name" value="Lipoyl_synth"/>
    <property type="match status" value="1"/>
</dbReference>
<dbReference type="SFLD" id="SFLDF00271">
    <property type="entry name" value="lipoyl_synthase"/>
    <property type="match status" value="1"/>
</dbReference>
<dbReference type="SFLD" id="SFLDG01058">
    <property type="entry name" value="lipoyl_synthase_like"/>
    <property type="match status" value="1"/>
</dbReference>
<dbReference type="SMART" id="SM00729">
    <property type="entry name" value="Elp3"/>
    <property type="match status" value="1"/>
</dbReference>
<dbReference type="SUPFAM" id="SSF102114">
    <property type="entry name" value="Radical SAM enzymes"/>
    <property type="match status" value="1"/>
</dbReference>
<dbReference type="PROSITE" id="PS51918">
    <property type="entry name" value="RADICAL_SAM"/>
    <property type="match status" value="1"/>
</dbReference>
<protein>
    <recommendedName>
        <fullName evidence="1">Lipoyl synthase, mitochondrial</fullName>
        <ecNumber evidence="1">2.8.1.8</ecNumber>
    </recommendedName>
    <alternativeName>
        <fullName evidence="1">Lipoate synthase</fullName>
        <shortName evidence="1">LS</shortName>
        <shortName evidence="1">Lip-syn</shortName>
    </alternativeName>
    <alternativeName>
        <fullName evidence="1">Lipoic acid synthase</fullName>
    </alternativeName>
</protein>
<organism>
    <name type="scientific">Schizosaccharomyces pombe (strain 972 / ATCC 24843)</name>
    <name type="common">Fission yeast</name>
    <dbReference type="NCBI Taxonomy" id="284812"/>
    <lineage>
        <taxon>Eukaryota</taxon>
        <taxon>Fungi</taxon>
        <taxon>Dikarya</taxon>
        <taxon>Ascomycota</taxon>
        <taxon>Taphrinomycotina</taxon>
        <taxon>Schizosaccharomycetes</taxon>
        <taxon>Schizosaccharomycetales</taxon>
        <taxon>Schizosaccharomycetaceae</taxon>
        <taxon>Schizosaccharomyces</taxon>
    </lineage>
</organism>
<comment type="function">
    <text evidence="1">Catalyzes the radical-mediated insertion of two sulfur atoms into the C-6 and C-8 positions of the octanoyl moiety bound to the lipoyl domains of lipoate-dependent enzymes, thereby converting the octanoylated domains into lipoylated derivatives.</text>
</comment>
<comment type="catalytic activity">
    <reaction evidence="1">
        <text>[[Fe-S] cluster scaffold protein carrying a second [4Fe-4S](2+) cluster] + N(6)-octanoyl-L-lysyl-[protein] + 2 oxidized [2Fe-2S]-[ferredoxin] + 2 S-adenosyl-L-methionine + 4 H(+) = [[Fe-S] cluster scaffold protein] + N(6)-[(R)-dihydrolipoyl]-L-lysyl-[protein] + 4 Fe(3+) + 2 hydrogen sulfide + 2 5'-deoxyadenosine + 2 L-methionine + 2 reduced [2Fe-2S]-[ferredoxin]</text>
        <dbReference type="Rhea" id="RHEA:16585"/>
        <dbReference type="Rhea" id="RHEA-COMP:9928"/>
        <dbReference type="Rhea" id="RHEA-COMP:10000"/>
        <dbReference type="Rhea" id="RHEA-COMP:10001"/>
        <dbReference type="Rhea" id="RHEA-COMP:10475"/>
        <dbReference type="Rhea" id="RHEA-COMP:14568"/>
        <dbReference type="Rhea" id="RHEA-COMP:14569"/>
        <dbReference type="ChEBI" id="CHEBI:15378"/>
        <dbReference type="ChEBI" id="CHEBI:17319"/>
        <dbReference type="ChEBI" id="CHEBI:29034"/>
        <dbReference type="ChEBI" id="CHEBI:29919"/>
        <dbReference type="ChEBI" id="CHEBI:33722"/>
        <dbReference type="ChEBI" id="CHEBI:33737"/>
        <dbReference type="ChEBI" id="CHEBI:33738"/>
        <dbReference type="ChEBI" id="CHEBI:57844"/>
        <dbReference type="ChEBI" id="CHEBI:59789"/>
        <dbReference type="ChEBI" id="CHEBI:78809"/>
        <dbReference type="ChEBI" id="CHEBI:83100"/>
        <dbReference type="EC" id="2.8.1.8"/>
    </reaction>
</comment>
<comment type="cofactor">
    <cofactor evidence="1">
        <name>[4Fe-4S] cluster</name>
        <dbReference type="ChEBI" id="CHEBI:49883"/>
    </cofactor>
    <text evidence="1">Binds 2 [4Fe-4S] clusters per subunit. One cluster is coordinated with 3 cysteines and an exchangeable S-adenosyl-L-methionine.</text>
</comment>
<comment type="pathway">
    <text evidence="1">Protein modification; protein lipoylation via endogenous pathway; protein N(6)-(lipoyl)lysine from octanoyl-[acyl-carrier-protein]: step 2/2.</text>
</comment>
<comment type="subcellular location">
    <subcellularLocation>
        <location evidence="1 3">Mitochondrion</location>
    </subcellularLocation>
</comment>
<comment type="miscellaneous">
    <text evidence="1">This protein may be expected to contain an N-terminal transit peptide but none has been predicted.</text>
</comment>
<comment type="similarity">
    <text evidence="1">Belongs to the radical SAM superfamily. Lipoyl synthase family.</text>
</comment>
<accession>O13642</accession>
<accession>O13643</accession>
<feature type="chain" id="PRO_0000017725" description="Lipoyl synthase, mitochondrial">
    <location>
        <begin position="1"/>
        <end position="370"/>
    </location>
</feature>
<feature type="domain" description="Radical SAM core" evidence="2">
    <location>
        <begin position="116"/>
        <end position="335"/>
    </location>
</feature>
<feature type="binding site" evidence="1">
    <location>
        <position position="100"/>
    </location>
    <ligand>
        <name>[4Fe-4S] cluster</name>
        <dbReference type="ChEBI" id="CHEBI:49883"/>
        <label>1</label>
    </ligand>
</feature>
<feature type="binding site" evidence="1">
    <location>
        <position position="105"/>
    </location>
    <ligand>
        <name>[4Fe-4S] cluster</name>
        <dbReference type="ChEBI" id="CHEBI:49883"/>
        <label>1</label>
    </ligand>
</feature>
<feature type="binding site" evidence="1">
    <location>
        <position position="111"/>
    </location>
    <ligand>
        <name>[4Fe-4S] cluster</name>
        <dbReference type="ChEBI" id="CHEBI:49883"/>
        <label>1</label>
    </ligand>
</feature>
<feature type="binding site" evidence="1">
    <location>
        <position position="131"/>
    </location>
    <ligand>
        <name>[4Fe-4S] cluster</name>
        <dbReference type="ChEBI" id="CHEBI:49883"/>
        <label>2</label>
        <note>4Fe-4S-S-AdoMet</note>
    </ligand>
</feature>
<feature type="binding site" evidence="1">
    <location>
        <position position="135"/>
    </location>
    <ligand>
        <name>[4Fe-4S] cluster</name>
        <dbReference type="ChEBI" id="CHEBI:49883"/>
        <label>2</label>
        <note>4Fe-4S-S-AdoMet</note>
    </ligand>
</feature>
<feature type="binding site" evidence="1">
    <location>
        <position position="138"/>
    </location>
    <ligand>
        <name>[4Fe-4S] cluster</name>
        <dbReference type="ChEBI" id="CHEBI:49883"/>
        <label>2</label>
        <note>4Fe-4S-S-AdoMet</note>
    </ligand>
</feature>
<feature type="binding site" evidence="1">
    <location>
        <position position="346"/>
    </location>
    <ligand>
        <name>[4Fe-4S] cluster</name>
        <dbReference type="ChEBI" id="CHEBI:49883"/>
        <label>1</label>
    </ligand>
</feature>
<evidence type="ECO:0000255" key="1">
    <source>
        <dbReference type="HAMAP-Rule" id="MF_03123"/>
    </source>
</evidence>
<evidence type="ECO:0000255" key="2">
    <source>
        <dbReference type="PROSITE-ProRule" id="PRU01266"/>
    </source>
</evidence>
<evidence type="ECO:0000269" key="3">
    <source>
    </source>
</evidence>
<keyword id="KW-0004">4Fe-4S</keyword>
<keyword id="KW-0408">Iron</keyword>
<keyword id="KW-0411">Iron-sulfur</keyword>
<keyword id="KW-0479">Metal-binding</keyword>
<keyword id="KW-0496">Mitochondrion</keyword>
<keyword id="KW-1185">Reference proteome</keyword>
<keyword id="KW-0949">S-adenosyl-L-methionine</keyword>
<keyword id="KW-0808">Transferase</keyword>
<name>LIPA_SCHPO</name>
<reference key="1">
    <citation type="journal article" date="2002" name="Nature">
        <title>The genome sequence of Schizosaccharomyces pombe.</title>
        <authorList>
            <person name="Wood V."/>
            <person name="Gwilliam R."/>
            <person name="Rajandream M.A."/>
            <person name="Lyne M.H."/>
            <person name="Lyne R."/>
            <person name="Stewart A."/>
            <person name="Sgouros J.G."/>
            <person name="Peat N."/>
            <person name="Hayles J."/>
            <person name="Baker S.G."/>
            <person name="Basham D."/>
            <person name="Bowman S."/>
            <person name="Brooks K."/>
            <person name="Brown D."/>
            <person name="Brown S."/>
            <person name="Chillingworth T."/>
            <person name="Churcher C.M."/>
            <person name="Collins M."/>
            <person name="Connor R."/>
            <person name="Cronin A."/>
            <person name="Davis P."/>
            <person name="Feltwell T."/>
            <person name="Fraser A."/>
            <person name="Gentles S."/>
            <person name="Goble A."/>
            <person name="Hamlin N."/>
            <person name="Harris D.E."/>
            <person name="Hidalgo J."/>
            <person name="Hodgson G."/>
            <person name="Holroyd S."/>
            <person name="Hornsby T."/>
            <person name="Howarth S."/>
            <person name="Huckle E.J."/>
            <person name="Hunt S."/>
            <person name="Jagels K."/>
            <person name="James K.D."/>
            <person name="Jones L."/>
            <person name="Jones M."/>
            <person name="Leather S."/>
            <person name="McDonald S."/>
            <person name="McLean J."/>
            <person name="Mooney P."/>
            <person name="Moule S."/>
            <person name="Mungall K.L."/>
            <person name="Murphy L.D."/>
            <person name="Niblett D."/>
            <person name="Odell C."/>
            <person name="Oliver K."/>
            <person name="O'Neil S."/>
            <person name="Pearson D."/>
            <person name="Quail M.A."/>
            <person name="Rabbinowitsch E."/>
            <person name="Rutherford K.M."/>
            <person name="Rutter S."/>
            <person name="Saunders D."/>
            <person name="Seeger K."/>
            <person name="Sharp S."/>
            <person name="Skelton J."/>
            <person name="Simmonds M.N."/>
            <person name="Squares R."/>
            <person name="Squares S."/>
            <person name="Stevens K."/>
            <person name="Taylor K."/>
            <person name="Taylor R.G."/>
            <person name="Tivey A."/>
            <person name="Walsh S.V."/>
            <person name="Warren T."/>
            <person name="Whitehead S."/>
            <person name="Woodward J.R."/>
            <person name="Volckaert G."/>
            <person name="Aert R."/>
            <person name="Robben J."/>
            <person name="Grymonprez B."/>
            <person name="Weltjens I."/>
            <person name="Vanstreels E."/>
            <person name="Rieger M."/>
            <person name="Schaefer M."/>
            <person name="Mueller-Auer S."/>
            <person name="Gabel C."/>
            <person name="Fuchs M."/>
            <person name="Duesterhoeft A."/>
            <person name="Fritzc C."/>
            <person name="Holzer E."/>
            <person name="Moestl D."/>
            <person name="Hilbert H."/>
            <person name="Borzym K."/>
            <person name="Langer I."/>
            <person name="Beck A."/>
            <person name="Lehrach H."/>
            <person name="Reinhardt R."/>
            <person name="Pohl T.M."/>
            <person name="Eger P."/>
            <person name="Zimmermann W."/>
            <person name="Wedler H."/>
            <person name="Wambutt R."/>
            <person name="Purnelle B."/>
            <person name="Goffeau A."/>
            <person name="Cadieu E."/>
            <person name="Dreano S."/>
            <person name="Gloux S."/>
            <person name="Lelaure V."/>
            <person name="Mottier S."/>
            <person name="Galibert F."/>
            <person name="Aves S.J."/>
            <person name="Xiang Z."/>
            <person name="Hunt C."/>
            <person name="Moore K."/>
            <person name="Hurst S.M."/>
            <person name="Lucas M."/>
            <person name="Rochet M."/>
            <person name="Gaillardin C."/>
            <person name="Tallada V.A."/>
            <person name="Garzon A."/>
            <person name="Thode G."/>
            <person name="Daga R.R."/>
            <person name="Cruzado L."/>
            <person name="Jimenez J."/>
            <person name="Sanchez M."/>
            <person name="del Rey F."/>
            <person name="Benito J."/>
            <person name="Dominguez A."/>
            <person name="Revuelta J.L."/>
            <person name="Moreno S."/>
            <person name="Armstrong J."/>
            <person name="Forsburg S.L."/>
            <person name="Cerutti L."/>
            <person name="Lowe T."/>
            <person name="McCombie W.R."/>
            <person name="Paulsen I."/>
            <person name="Potashkin J."/>
            <person name="Shpakovski G.V."/>
            <person name="Ussery D."/>
            <person name="Barrell B.G."/>
            <person name="Nurse P."/>
        </authorList>
    </citation>
    <scope>NUCLEOTIDE SEQUENCE [LARGE SCALE GENOMIC DNA]</scope>
    <source>
        <strain>972 / ATCC 24843</strain>
    </source>
</reference>
<reference key="2">
    <citation type="journal article" date="2000" name="Yeast">
        <title>A 38 kb segment containing the cdc2 gene from the left arm of fission yeast chromosome II: sequence analysis and characterization of the genomic DNA and cDNAs encoded on the segment.</title>
        <authorList>
            <person name="Machida M."/>
            <person name="Yamazaki S."/>
            <person name="Kunihiro S."/>
            <person name="Tanaka T."/>
            <person name="Kushida N."/>
            <person name="Jinno K."/>
            <person name="Haikawa Y."/>
            <person name="Yamazaki J."/>
            <person name="Yamamoto S."/>
            <person name="Sekine M."/>
            <person name="Oguchi A."/>
            <person name="Nagai Y."/>
            <person name="Sakai M."/>
            <person name="Aoki K."/>
            <person name="Ogura K."/>
            <person name="Kudoh Y."/>
            <person name="Kikuchi H."/>
            <person name="Zhang M.Q."/>
            <person name="Yanagida M."/>
        </authorList>
    </citation>
    <scope>NUCLEOTIDE SEQUENCE [LARGE SCALE GENOMIC DNA] OF 94-370</scope>
    <source>
        <strain>972 / ATCC 24843</strain>
    </source>
</reference>
<reference key="3">
    <citation type="journal article" date="2006" name="Nat. Biotechnol.">
        <title>ORFeome cloning and global analysis of protein localization in the fission yeast Schizosaccharomyces pombe.</title>
        <authorList>
            <person name="Matsuyama A."/>
            <person name="Arai R."/>
            <person name="Yashiroda Y."/>
            <person name="Shirai A."/>
            <person name="Kamata A."/>
            <person name="Sekido S."/>
            <person name="Kobayashi Y."/>
            <person name="Hashimoto A."/>
            <person name="Hamamoto M."/>
            <person name="Hiraoka Y."/>
            <person name="Horinouchi S."/>
            <person name="Yoshida M."/>
        </authorList>
    </citation>
    <scope>SUBCELLULAR LOCATION [LARGE SCALE ANALYSIS]</scope>
</reference>
<proteinExistence type="inferred from homology"/>
<gene>
    <name type="primary">lip5</name>
    <name type="ORF">pi050</name>
    <name type="ORF">SPBC8D2.15</name>
</gene>
<sequence length="370" mass="41690">MLKIGRNATILKNNFWFASVRFQSGGFSEKLAKGPSFADFLNMDKPLTADEAFELDRKVELPNGSIHKRLPSWLKTKVPLGTNFNRIKHDLRGSHLHTVCEEAKCPNIGECWGGKDKSRATATIMLMGDTCTRGCRFCSVKTSRRPGPLDPNEPENTAEAIKQWNLGYIVLTSVDRDDLTDLGANHIAKTIQKIKEKAPHILVEALTPDFSGRMDLVEIVAKSGLDVFAHNVETVEELTPFVRDRRATYRQSLSVLKHVKKTCPHLITKTSIMLGLGETDAEILTTLKDLLEHNVDVVTFGQYMRPTKRHLKVQEYVHPKKFEYWKEVAEKLGFLYVASGPLVRSSYKAGEYFMENLIKKRSGNPASMSV</sequence>